<gene>
    <name type="ORF">CG2182</name>
</gene>
<protein>
    <recommendedName>
        <fullName>Gametogenetin-binding protein 2-like</fullName>
    </recommendedName>
</protein>
<sequence>MARLTKVYNTDDDDSGYVGRRNLPLVAGDKLMMLMDLNSKGLVIDSPLIRGRELEEFSRKFKLLTEAERRQSLEIDSASFMEVLNQCVQCVGCRRRVERLFHQLTETGHRTLDPLELRPTATLGIVEEKLKTPQALGTLLYRHHEVLNNLLDNKLRNKTRCVLHSLDAFRAKPFSETWREVWSAMKSNCRNELTIIETKELHDVLENYLKKHKFCSGCRTKIERAYKILIGEISSKEKGYAAQLYAHIRKCVPDQHIHVTTNKIEFLDALIKRAEPEVNGSYSKLRERHAKTLEIAQEEVLTCVGMIMYERLRRIYVSLREEERACQVLAAVGVHALCRSFDTFVEQKQGISNLELLYQEISRAERAKQIKREQKKLKKKKKKDEKKNLLHRQCDDTEANESDEEEEELRNEELDLEEESQMQHEELSDPGADDGIVIEAARSPEPEPELTSKPTKSKPKKQSKKKKQKKAAFTKMGNQKQMQATARVQPLDADHDQLDVASCISSSIAKTVGDKCEECLASMPNCPCEQDVRDSGYGSDPPSHAGSRTSSAISSPEGSEVSCSDGLCNHDVHDEDSDDLLFYSHQSQLDHKFSLLQMWDDFDEYDDKDEETYYIPQEVVMAFKCHREQVQRKREELRAKLRANFERLCVQHGVQTQVQKSKRTTSALVGQ</sequence>
<reference key="1">
    <citation type="journal article" date="2000" name="Science">
        <title>The genome sequence of Drosophila melanogaster.</title>
        <authorList>
            <person name="Adams M.D."/>
            <person name="Celniker S.E."/>
            <person name="Holt R.A."/>
            <person name="Evans C.A."/>
            <person name="Gocayne J.D."/>
            <person name="Amanatides P.G."/>
            <person name="Scherer S.E."/>
            <person name="Li P.W."/>
            <person name="Hoskins R.A."/>
            <person name="Galle R.F."/>
            <person name="George R.A."/>
            <person name="Lewis S.E."/>
            <person name="Richards S."/>
            <person name="Ashburner M."/>
            <person name="Henderson S.N."/>
            <person name="Sutton G.G."/>
            <person name="Wortman J.R."/>
            <person name="Yandell M.D."/>
            <person name="Zhang Q."/>
            <person name="Chen L.X."/>
            <person name="Brandon R.C."/>
            <person name="Rogers Y.-H.C."/>
            <person name="Blazej R.G."/>
            <person name="Champe M."/>
            <person name="Pfeiffer B.D."/>
            <person name="Wan K.H."/>
            <person name="Doyle C."/>
            <person name="Baxter E.G."/>
            <person name="Helt G."/>
            <person name="Nelson C.R."/>
            <person name="Miklos G.L.G."/>
            <person name="Abril J.F."/>
            <person name="Agbayani A."/>
            <person name="An H.-J."/>
            <person name="Andrews-Pfannkoch C."/>
            <person name="Baldwin D."/>
            <person name="Ballew R.M."/>
            <person name="Basu A."/>
            <person name="Baxendale J."/>
            <person name="Bayraktaroglu L."/>
            <person name="Beasley E.M."/>
            <person name="Beeson K.Y."/>
            <person name="Benos P.V."/>
            <person name="Berman B.P."/>
            <person name="Bhandari D."/>
            <person name="Bolshakov S."/>
            <person name="Borkova D."/>
            <person name="Botchan M.R."/>
            <person name="Bouck J."/>
            <person name="Brokstein P."/>
            <person name="Brottier P."/>
            <person name="Burtis K.C."/>
            <person name="Busam D.A."/>
            <person name="Butler H."/>
            <person name="Cadieu E."/>
            <person name="Center A."/>
            <person name="Chandra I."/>
            <person name="Cherry J.M."/>
            <person name="Cawley S."/>
            <person name="Dahlke C."/>
            <person name="Davenport L.B."/>
            <person name="Davies P."/>
            <person name="de Pablos B."/>
            <person name="Delcher A."/>
            <person name="Deng Z."/>
            <person name="Mays A.D."/>
            <person name="Dew I."/>
            <person name="Dietz S.M."/>
            <person name="Dodson K."/>
            <person name="Doup L.E."/>
            <person name="Downes M."/>
            <person name="Dugan-Rocha S."/>
            <person name="Dunkov B.C."/>
            <person name="Dunn P."/>
            <person name="Durbin K.J."/>
            <person name="Evangelista C.C."/>
            <person name="Ferraz C."/>
            <person name="Ferriera S."/>
            <person name="Fleischmann W."/>
            <person name="Fosler C."/>
            <person name="Gabrielian A.E."/>
            <person name="Garg N.S."/>
            <person name="Gelbart W.M."/>
            <person name="Glasser K."/>
            <person name="Glodek A."/>
            <person name="Gong F."/>
            <person name="Gorrell J.H."/>
            <person name="Gu Z."/>
            <person name="Guan P."/>
            <person name="Harris M."/>
            <person name="Harris N.L."/>
            <person name="Harvey D.A."/>
            <person name="Heiman T.J."/>
            <person name="Hernandez J.R."/>
            <person name="Houck J."/>
            <person name="Hostin D."/>
            <person name="Houston K.A."/>
            <person name="Howland T.J."/>
            <person name="Wei M.-H."/>
            <person name="Ibegwam C."/>
            <person name="Jalali M."/>
            <person name="Kalush F."/>
            <person name="Karpen G.H."/>
            <person name="Ke Z."/>
            <person name="Kennison J.A."/>
            <person name="Ketchum K.A."/>
            <person name="Kimmel B.E."/>
            <person name="Kodira C.D."/>
            <person name="Kraft C.L."/>
            <person name="Kravitz S."/>
            <person name="Kulp D."/>
            <person name="Lai Z."/>
            <person name="Lasko P."/>
            <person name="Lei Y."/>
            <person name="Levitsky A.A."/>
            <person name="Li J.H."/>
            <person name="Li Z."/>
            <person name="Liang Y."/>
            <person name="Lin X."/>
            <person name="Liu X."/>
            <person name="Mattei B."/>
            <person name="McIntosh T.C."/>
            <person name="McLeod M.P."/>
            <person name="McPherson D."/>
            <person name="Merkulov G."/>
            <person name="Milshina N.V."/>
            <person name="Mobarry C."/>
            <person name="Morris J."/>
            <person name="Moshrefi A."/>
            <person name="Mount S.M."/>
            <person name="Moy M."/>
            <person name="Murphy B."/>
            <person name="Murphy L."/>
            <person name="Muzny D.M."/>
            <person name="Nelson D.L."/>
            <person name="Nelson D.R."/>
            <person name="Nelson K.A."/>
            <person name="Nixon K."/>
            <person name="Nusskern D.R."/>
            <person name="Pacleb J.M."/>
            <person name="Palazzolo M."/>
            <person name="Pittman G.S."/>
            <person name="Pan S."/>
            <person name="Pollard J."/>
            <person name="Puri V."/>
            <person name="Reese M.G."/>
            <person name="Reinert K."/>
            <person name="Remington K."/>
            <person name="Saunders R.D.C."/>
            <person name="Scheeler F."/>
            <person name="Shen H."/>
            <person name="Shue B.C."/>
            <person name="Siden-Kiamos I."/>
            <person name="Simpson M."/>
            <person name="Skupski M.P."/>
            <person name="Smith T.J."/>
            <person name="Spier E."/>
            <person name="Spradling A.C."/>
            <person name="Stapleton M."/>
            <person name="Strong R."/>
            <person name="Sun E."/>
            <person name="Svirskas R."/>
            <person name="Tector C."/>
            <person name="Turner R."/>
            <person name="Venter E."/>
            <person name="Wang A.H."/>
            <person name="Wang X."/>
            <person name="Wang Z.-Y."/>
            <person name="Wassarman D.A."/>
            <person name="Weinstock G.M."/>
            <person name="Weissenbach J."/>
            <person name="Williams S.M."/>
            <person name="Woodage T."/>
            <person name="Worley K.C."/>
            <person name="Wu D."/>
            <person name="Yang S."/>
            <person name="Yao Q.A."/>
            <person name="Ye J."/>
            <person name="Yeh R.-F."/>
            <person name="Zaveri J.S."/>
            <person name="Zhan M."/>
            <person name="Zhang G."/>
            <person name="Zhao Q."/>
            <person name="Zheng L."/>
            <person name="Zheng X.H."/>
            <person name="Zhong F.N."/>
            <person name="Zhong W."/>
            <person name="Zhou X."/>
            <person name="Zhu S.C."/>
            <person name="Zhu X."/>
            <person name="Smith H.O."/>
            <person name="Gibbs R.A."/>
            <person name="Myers E.W."/>
            <person name="Rubin G.M."/>
            <person name="Venter J.C."/>
        </authorList>
    </citation>
    <scope>NUCLEOTIDE SEQUENCE [LARGE SCALE GENOMIC DNA]</scope>
    <source>
        <strain>Berkeley</strain>
    </source>
</reference>
<reference key="2">
    <citation type="journal article" date="2002" name="Genome Biol.">
        <title>Annotation of the Drosophila melanogaster euchromatic genome: a systematic review.</title>
        <authorList>
            <person name="Misra S."/>
            <person name="Crosby M.A."/>
            <person name="Mungall C.J."/>
            <person name="Matthews B.B."/>
            <person name="Campbell K.S."/>
            <person name="Hradecky P."/>
            <person name="Huang Y."/>
            <person name="Kaminker J.S."/>
            <person name="Millburn G.H."/>
            <person name="Prochnik S.E."/>
            <person name="Smith C.D."/>
            <person name="Tupy J.L."/>
            <person name="Whitfield E.J."/>
            <person name="Bayraktaroglu L."/>
            <person name="Berman B.P."/>
            <person name="Bettencourt B.R."/>
            <person name="Celniker S.E."/>
            <person name="de Grey A.D.N.J."/>
            <person name="Drysdale R.A."/>
            <person name="Harris N.L."/>
            <person name="Richter J."/>
            <person name="Russo S."/>
            <person name="Schroeder A.J."/>
            <person name="Shu S.Q."/>
            <person name="Stapleton M."/>
            <person name="Yamada C."/>
            <person name="Ashburner M."/>
            <person name="Gelbart W.M."/>
            <person name="Rubin G.M."/>
            <person name="Lewis S.E."/>
        </authorList>
    </citation>
    <scope>GENOME REANNOTATION</scope>
    <scope>ALTERNATIVE SPLICING</scope>
    <source>
        <strain>Berkeley</strain>
    </source>
</reference>
<reference key="3">
    <citation type="journal article" date="2002" name="Genome Biol.">
        <title>A Drosophila full-length cDNA resource.</title>
        <authorList>
            <person name="Stapleton M."/>
            <person name="Carlson J.W."/>
            <person name="Brokstein P."/>
            <person name="Yu C."/>
            <person name="Champe M."/>
            <person name="George R.A."/>
            <person name="Guarin H."/>
            <person name="Kronmiller B."/>
            <person name="Pacleb J.M."/>
            <person name="Park S."/>
            <person name="Wan K.H."/>
            <person name="Rubin G.M."/>
            <person name="Celniker S.E."/>
        </authorList>
    </citation>
    <scope>NUCLEOTIDE SEQUENCE [LARGE SCALE MRNA] (ISOFORM A)</scope>
    <source>
        <strain>Berkeley</strain>
        <tissue>Embryo</tissue>
    </source>
</reference>
<reference key="4">
    <citation type="submission" date="2004-10" db="EMBL/GenBank/DDBJ databases">
        <authorList>
            <person name="Stapleton M."/>
            <person name="Carlson J.W."/>
            <person name="Chavez C."/>
            <person name="Frise E."/>
            <person name="George R.A."/>
            <person name="Pacleb J.M."/>
            <person name="Park S."/>
            <person name="Wan K.H."/>
            <person name="Yu C."/>
            <person name="Rubin G.M."/>
            <person name="Celniker S.E."/>
        </authorList>
    </citation>
    <scope>NUCLEOTIDE SEQUENCE [LARGE SCALE MRNA] (ISOFORM A)</scope>
    <source>
        <strain>Berkeley</strain>
        <tissue>Larva</tissue>
        <tissue>Pupae</tissue>
    </source>
</reference>
<organism>
    <name type="scientific">Drosophila melanogaster</name>
    <name type="common">Fruit fly</name>
    <dbReference type="NCBI Taxonomy" id="7227"/>
    <lineage>
        <taxon>Eukaryota</taxon>
        <taxon>Metazoa</taxon>
        <taxon>Ecdysozoa</taxon>
        <taxon>Arthropoda</taxon>
        <taxon>Hexapoda</taxon>
        <taxon>Insecta</taxon>
        <taxon>Pterygota</taxon>
        <taxon>Neoptera</taxon>
        <taxon>Endopterygota</taxon>
        <taxon>Diptera</taxon>
        <taxon>Brachycera</taxon>
        <taxon>Muscomorpha</taxon>
        <taxon>Ephydroidea</taxon>
        <taxon>Drosophilidae</taxon>
        <taxon>Drosophila</taxon>
        <taxon>Sophophora</taxon>
    </lineage>
</organism>
<proteinExistence type="evidence at transcript level"/>
<accession>Q9VNG1</accession>
<accession>Q8IPP6</accession>
<accession>Q8MR07</accession>
<comment type="alternative products">
    <event type="alternative splicing"/>
    <isoform>
        <id>Q9VNG1-1</id>
        <name>A</name>
        <sequence type="displayed"/>
    </isoform>
    <isoform>
        <id>Q9VNG1-2</id>
        <name>B</name>
        <sequence type="described" ref="VSP_019182"/>
    </isoform>
</comment>
<comment type="sequence caution" evidence="2">
    <conflict type="frameshift">
        <sequence resource="EMBL-CDS" id="AAM52714"/>
    </conflict>
</comment>
<keyword id="KW-0025">Alternative splicing</keyword>
<keyword id="KW-1185">Reference proteome</keyword>
<dbReference type="EMBL" id="AE014297">
    <property type="protein sequence ID" value="AAF51975.3"/>
    <property type="molecule type" value="Genomic_DNA"/>
</dbReference>
<dbReference type="EMBL" id="AE014297">
    <property type="protein sequence ID" value="AAN13256.1"/>
    <property type="molecule type" value="Genomic_DNA"/>
</dbReference>
<dbReference type="EMBL" id="AY122202">
    <property type="protein sequence ID" value="AAM52714.1"/>
    <property type="status" value="ALT_FRAME"/>
    <property type="molecule type" value="mRNA"/>
</dbReference>
<dbReference type="EMBL" id="BT016040">
    <property type="protein sequence ID" value="AAV36925.1"/>
    <property type="molecule type" value="mRNA"/>
</dbReference>
<dbReference type="RefSeq" id="NP_649570.1">
    <molecule id="Q9VNG1-1"/>
    <property type="nucleotide sequence ID" value="NM_141313.3"/>
</dbReference>
<dbReference type="SMR" id="Q9VNG1"/>
<dbReference type="BioGRID" id="65903">
    <property type="interactions" value="4"/>
</dbReference>
<dbReference type="FunCoup" id="Q9VNG1">
    <property type="interactions" value="2655"/>
</dbReference>
<dbReference type="IntAct" id="Q9VNG1">
    <property type="interactions" value="1"/>
</dbReference>
<dbReference type="STRING" id="7227.FBpp0078379"/>
<dbReference type="PaxDb" id="7227-FBpp0078379"/>
<dbReference type="DNASU" id="40697"/>
<dbReference type="EnsemblMetazoa" id="FBtr0078730">
    <molecule id="Q9VNG1-1"/>
    <property type="protein sequence ID" value="FBpp0078379"/>
    <property type="gene ID" value="FBgn0037360"/>
</dbReference>
<dbReference type="GeneID" id="40697"/>
<dbReference type="KEGG" id="dme:Dmel_CG2182"/>
<dbReference type="UCSC" id="CG2182-RA">
    <molecule id="Q9VNG1-1"/>
    <property type="organism name" value="d. melanogaster"/>
</dbReference>
<dbReference type="AGR" id="FB:FBgn0037360"/>
<dbReference type="FlyBase" id="FBgn0037360">
    <property type="gene designation" value="CG2182"/>
</dbReference>
<dbReference type="VEuPathDB" id="VectorBase:FBgn0037360"/>
<dbReference type="eggNOG" id="ENOG502QQ20">
    <property type="taxonomic scope" value="Eukaryota"/>
</dbReference>
<dbReference type="GeneTree" id="ENSGT00390000009552"/>
<dbReference type="HOGENOM" id="CLU_024870_0_0_1"/>
<dbReference type="InParanoid" id="Q9VNG1"/>
<dbReference type="OMA" id="MMLMDLN"/>
<dbReference type="OrthoDB" id="2422440at2759"/>
<dbReference type="PhylomeDB" id="Q9VNG1"/>
<dbReference type="BioGRID-ORCS" id="40697">
    <property type="hits" value="1 hit in 1 CRISPR screen"/>
</dbReference>
<dbReference type="ChiTaRS" id="CG2182">
    <property type="organism name" value="fly"/>
</dbReference>
<dbReference type="GenomeRNAi" id="40697"/>
<dbReference type="PRO" id="PR:Q9VNG1"/>
<dbReference type="Proteomes" id="UP000000803">
    <property type="component" value="Chromosome 3R"/>
</dbReference>
<dbReference type="Bgee" id="FBgn0037360">
    <property type="expression patterns" value="Expressed in oocyte and 264 other cell types or tissues"/>
</dbReference>
<dbReference type="ExpressionAtlas" id="Q9VNG1">
    <property type="expression patterns" value="baseline and differential"/>
</dbReference>
<dbReference type="GO" id="GO:0005737">
    <property type="term" value="C:cytoplasm"/>
    <property type="evidence" value="ECO:0000318"/>
    <property type="project" value="GO_Central"/>
</dbReference>
<dbReference type="GO" id="GO:0005634">
    <property type="term" value="C:nucleus"/>
    <property type="evidence" value="ECO:0000318"/>
    <property type="project" value="GO_Central"/>
</dbReference>
<dbReference type="InterPro" id="IPR026073">
    <property type="entry name" value="GGNBP2"/>
</dbReference>
<dbReference type="PANTHER" id="PTHR13601">
    <property type="entry name" value="GAMETOGENETIN-BINDING PROTEIN 2"/>
    <property type="match status" value="1"/>
</dbReference>
<dbReference type="PANTHER" id="PTHR13601:SF2">
    <property type="entry name" value="GAMETOGENETIN-BINDING PROTEIN 2"/>
    <property type="match status" value="1"/>
</dbReference>
<evidence type="ECO:0000256" key="1">
    <source>
        <dbReference type="SAM" id="MobiDB-lite"/>
    </source>
</evidence>
<evidence type="ECO:0000305" key="2"/>
<feature type="chain" id="PRO_0000239354" description="Gametogenetin-binding protein 2-like">
    <location>
        <begin position="1"/>
        <end position="671"/>
    </location>
</feature>
<feature type="region of interest" description="Disordered" evidence="1">
    <location>
        <begin position="372"/>
        <end position="489"/>
    </location>
</feature>
<feature type="region of interest" description="Disordered" evidence="1">
    <location>
        <begin position="532"/>
        <end position="562"/>
    </location>
</feature>
<feature type="compositionally biased region" description="Basic residues" evidence="1">
    <location>
        <begin position="373"/>
        <end position="384"/>
    </location>
</feature>
<feature type="compositionally biased region" description="Basic and acidic residues" evidence="1">
    <location>
        <begin position="385"/>
        <end position="395"/>
    </location>
</feature>
<feature type="compositionally biased region" description="Acidic residues" evidence="1">
    <location>
        <begin position="396"/>
        <end position="420"/>
    </location>
</feature>
<feature type="compositionally biased region" description="Basic residues" evidence="1">
    <location>
        <begin position="455"/>
        <end position="472"/>
    </location>
</feature>
<feature type="compositionally biased region" description="Polar residues" evidence="1">
    <location>
        <begin position="476"/>
        <end position="486"/>
    </location>
</feature>
<feature type="compositionally biased region" description="Polar residues" evidence="1">
    <location>
        <begin position="546"/>
        <end position="557"/>
    </location>
</feature>
<feature type="splice variant" id="VSP_019182" description="In isoform B." evidence="2">
    <location>
        <begin position="1"/>
        <end position="32"/>
    </location>
</feature>
<name>GGNB2_DROME</name>